<name>AVE_DROME</name>
<comment type="function">
    <text evidence="2">Required for normal photoreceptor differentiation between Ras and Raf for EGFR signaling in the eye and for mitogen-activated protein kinase phosphorylation. Probably acts together with Cnk to promote Raf activation, perhaps by recruiting an activating kinase.</text>
</comment>
<comment type="subunit">
    <text evidence="2">Interacts with the SAM domain of cnk.</text>
</comment>
<comment type="interaction">
    <interactant intactId="EBI-2563975">
        <id>Q8ML92</id>
    </interactant>
    <interactant intactId="EBI-111569">
        <id>Q7KNQ9</id>
        <label>cnk</label>
    </interactant>
    <organismsDiffer>false</organismsDiffer>
    <experiments>5</experiments>
</comment>
<comment type="interaction">
    <interactant intactId="EBI-2563975">
        <id>Q8ML92</id>
    </interactant>
    <interactant intactId="EBI-1045119">
        <id>Q8WXI2</id>
        <label>CNKSR2</label>
    </interactant>
    <organismsDiffer>true</organismsDiffer>
    <experiments>5</experiments>
</comment>
<comment type="subcellular location">
    <subcellularLocation>
        <location evidence="2">Cytoplasm</location>
    </subcellularLocation>
    <subcellularLocation>
        <location evidence="2">Membrane</location>
        <topology evidence="2">Peripheral membrane protein</topology>
    </subcellularLocation>
</comment>
<comment type="developmental stage">
    <text evidence="2">Expressed ubiquitously throughout development.</text>
</comment>
<comment type="miscellaneous">
    <text>'Aveugle' means 'blind' in French.</text>
</comment>
<gene>
    <name type="primary">ave</name>
    <name type="ORF">CG30476</name>
</gene>
<keyword id="KW-0002">3D-structure</keyword>
<keyword id="KW-0963">Cytoplasm</keyword>
<keyword id="KW-0472">Membrane</keyword>
<keyword id="KW-1185">Reference proteome</keyword>
<keyword id="KW-0716">Sensory transduction</keyword>
<keyword id="KW-0844">Vision</keyword>
<dbReference type="EMBL" id="AE013599">
    <property type="protein sequence ID" value="AAM68548.1"/>
    <property type="molecule type" value="Genomic_DNA"/>
</dbReference>
<dbReference type="EMBL" id="BT001710">
    <property type="protein sequence ID" value="AAN71465.1"/>
    <property type="molecule type" value="mRNA"/>
</dbReference>
<dbReference type="RefSeq" id="NP_725413.1">
    <property type="nucleotide sequence ID" value="NM_166066.3"/>
</dbReference>
<dbReference type="PDB" id="3BS5">
    <property type="method" value="X-ray"/>
    <property type="resolution" value="2.00 A"/>
    <property type="chains" value="A=1-106"/>
</dbReference>
<dbReference type="PDB" id="3BS7">
    <property type="method" value="X-ray"/>
    <property type="resolution" value="1.90 A"/>
    <property type="chains" value="A/B=21-98"/>
</dbReference>
<dbReference type="PDB" id="8BW8">
    <property type="method" value="X-ray"/>
    <property type="resolution" value="2.10 A"/>
    <property type="chains" value="A/C/E=2-106"/>
</dbReference>
<dbReference type="PDB" id="8BW9">
    <property type="method" value="EM"/>
    <property type="resolution" value="3.32 A"/>
    <property type="chains" value="A=2-106"/>
</dbReference>
<dbReference type="PDBsum" id="3BS5"/>
<dbReference type="PDBsum" id="3BS7"/>
<dbReference type="PDBsum" id="8BW8"/>
<dbReference type="PDBsum" id="8BW9"/>
<dbReference type="EMDB" id="EMD-16281"/>
<dbReference type="SMR" id="Q8ML92"/>
<dbReference type="BioGRID" id="73183">
    <property type="interactions" value="3"/>
</dbReference>
<dbReference type="DIP" id="DIP-29737N"/>
<dbReference type="FunCoup" id="Q8ML92">
    <property type="interactions" value="191"/>
</dbReference>
<dbReference type="IntAct" id="Q8ML92">
    <property type="interactions" value="4"/>
</dbReference>
<dbReference type="STRING" id="7227.FBpp0086569"/>
<dbReference type="PaxDb" id="7227-FBpp0086569"/>
<dbReference type="DNASU" id="246638"/>
<dbReference type="EnsemblMetazoa" id="FBtr0087439">
    <property type="protein sequence ID" value="FBpp0086569"/>
    <property type="gene ID" value="FBgn0050476"/>
</dbReference>
<dbReference type="GeneID" id="246638"/>
<dbReference type="KEGG" id="dme:Dmel_CG30476"/>
<dbReference type="UCSC" id="CG30476-RA">
    <property type="organism name" value="d. melanogaster"/>
</dbReference>
<dbReference type="AGR" id="FB:FBgn0050476"/>
<dbReference type="CTD" id="246638"/>
<dbReference type="FlyBase" id="FBgn0050476">
    <property type="gene designation" value="ave"/>
</dbReference>
<dbReference type="VEuPathDB" id="VectorBase:FBgn0050476"/>
<dbReference type="eggNOG" id="ENOG502RXXU">
    <property type="taxonomic scope" value="Eukaryota"/>
</dbReference>
<dbReference type="GeneTree" id="ENSGT00390000008161"/>
<dbReference type="HOGENOM" id="CLU_172777_0_0_1"/>
<dbReference type="InParanoid" id="Q8ML92"/>
<dbReference type="OMA" id="IMKLHLK"/>
<dbReference type="OrthoDB" id="434324at2759"/>
<dbReference type="PhylomeDB" id="Q8ML92"/>
<dbReference type="Reactome" id="R-DME-209190">
    <property type="pathway name" value="Phosphorylation of CI"/>
</dbReference>
<dbReference type="Reactome" id="R-DME-209214">
    <property type="pathway name" value="Phosphorylation of SMO"/>
</dbReference>
<dbReference type="Reactome" id="R-DME-432553">
    <property type="pathway name" value="Phosphorylation of PER and TIM"/>
</dbReference>
<dbReference type="SignaLink" id="Q8ML92"/>
<dbReference type="BioGRID-ORCS" id="246638">
    <property type="hits" value="2 hits in 3 CRISPR screens"/>
</dbReference>
<dbReference type="EvolutionaryTrace" id="Q8ML92"/>
<dbReference type="GenomeRNAi" id="246638"/>
<dbReference type="PRO" id="PR:Q8ML92"/>
<dbReference type="Proteomes" id="UP000000803">
    <property type="component" value="Chromosome 2R"/>
</dbReference>
<dbReference type="Bgee" id="FBgn0050476">
    <property type="expression patterns" value="Expressed in transmedullary neuron Tm5c (Drosophila) in brain and 85 other cell types or tissues"/>
</dbReference>
<dbReference type="ExpressionAtlas" id="Q8ML92">
    <property type="expression patterns" value="baseline and differential"/>
</dbReference>
<dbReference type="GO" id="GO:0005737">
    <property type="term" value="C:cytoplasm"/>
    <property type="evidence" value="ECO:0000314"/>
    <property type="project" value="UniProtKB"/>
</dbReference>
<dbReference type="GO" id="GO:0009898">
    <property type="term" value="C:cytoplasmic side of plasma membrane"/>
    <property type="evidence" value="ECO:0000314"/>
    <property type="project" value="FlyBase"/>
</dbReference>
<dbReference type="GO" id="GO:0005829">
    <property type="term" value="C:cytosol"/>
    <property type="evidence" value="ECO:0000314"/>
    <property type="project" value="FlyBase"/>
</dbReference>
<dbReference type="GO" id="GO:0097110">
    <property type="term" value="F:scaffold protein binding"/>
    <property type="evidence" value="ECO:0000353"/>
    <property type="project" value="FlyBase"/>
</dbReference>
<dbReference type="GO" id="GO:0007169">
    <property type="term" value="P:cell surface receptor protein tyrosine kinase signaling pathway"/>
    <property type="evidence" value="ECO:0000315"/>
    <property type="project" value="FlyBase"/>
</dbReference>
<dbReference type="GO" id="GO:0042675">
    <property type="term" value="P:compound eye cone cell differentiation"/>
    <property type="evidence" value="ECO:0000315"/>
    <property type="project" value="FlyBase"/>
</dbReference>
<dbReference type="GO" id="GO:0001751">
    <property type="term" value="P:compound eye photoreceptor cell differentiation"/>
    <property type="evidence" value="ECO:0000315"/>
    <property type="project" value="FlyBase"/>
</dbReference>
<dbReference type="GO" id="GO:0007173">
    <property type="term" value="P:epidermal growth factor receptor signaling pathway"/>
    <property type="evidence" value="ECO:0000315"/>
    <property type="project" value="UniProtKB"/>
</dbReference>
<dbReference type="GO" id="GO:0001754">
    <property type="term" value="P:eye photoreceptor cell differentiation"/>
    <property type="evidence" value="ECO:0000315"/>
    <property type="project" value="UniProtKB"/>
</dbReference>
<dbReference type="GO" id="GO:0070374">
    <property type="term" value="P:positive regulation of ERK1 and ERK2 cascade"/>
    <property type="evidence" value="ECO:0000314"/>
    <property type="project" value="FlyBase"/>
</dbReference>
<dbReference type="GO" id="GO:0046579">
    <property type="term" value="P:positive regulation of Ras protein signal transduction"/>
    <property type="evidence" value="ECO:0007003"/>
    <property type="project" value="FlyBase"/>
</dbReference>
<dbReference type="GO" id="GO:0007601">
    <property type="term" value="P:visual perception"/>
    <property type="evidence" value="ECO:0007669"/>
    <property type="project" value="UniProtKB-KW"/>
</dbReference>
<dbReference type="CDD" id="cd09510">
    <property type="entry name" value="SAM_aveugle-like"/>
    <property type="match status" value="1"/>
</dbReference>
<dbReference type="FunFam" id="1.10.150.50:FF:000105">
    <property type="entry name" value="Blast:Protein aveugle"/>
    <property type="match status" value="1"/>
</dbReference>
<dbReference type="Gene3D" id="1.10.150.50">
    <property type="entry name" value="Transcription Factor, Ets-1"/>
    <property type="match status" value="1"/>
</dbReference>
<dbReference type="InterPro" id="IPR039144">
    <property type="entry name" value="Aveugle-like_SAM_dom"/>
</dbReference>
<dbReference type="InterPro" id="IPR001660">
    <property type="entry name" value="SAM"/>
</dbReference>
<dbReference type="InterPro" id="IPR013761">
    <property type="entry name" value="SAM/pointed_sf"/>
</dbReference>
<dbReference type="InterPro" id="IPR052268">
    <property type="entry name" value="SAM_domain-containing_protein"/>
</dbReference>
<dbReference type="PANTHER" id="PTHR20843:SF0">
    <property type="entry name" value="PROTEIN AVEUGLE"/>
    <property type="match status" value="1"/>
</dbReference>
<dbReference type="PANTHER" id="PTHR20843">
    <property type="entry name" value="STERILE ALPHA MOTIF DOMAIN CONTAINING PROTEIN 10"/>
    <property type="match status" value="1"/>
</dbReference>
<dbReference type="Pfam" id="PF07647">
    <property type="entry name" value="SAM_2"/>
    <property type="match status" value="1"/>
</dbReference>
<dbReference type="SMART" id="SM00454">
    <property type="entry name" value="SAM"/>
    <property type="match status" value="1"/>
</dbReference>
<dbReference type="SUPFAM" id="SSF47769">
    <property type="entry name" value="SAM/Pointed domain"/>
    <property type="match status" value="1"/>
</dbReference>
<dbReference type="PROSITE" id="PS50105">
    <property type="entry name" value="SAM_DOMAIN"/>
    <property type="match status" value="1"/>
</dbReference>
<evidence type="ECO:0000255" key="1">
    <source>
        <dbReference type="PROSITE-ProRule" id="PRU00184"/>
    </source>
</evidence>
<evidence type="ECO:0000269" key="2">
    <source>
    </source>
</evidence>
<evidence type="ECO:0007829" key="3">
    <source>
        <dbReference type="PDB" id="3BS7"/>
    </source>
</evidence>
<proteinExistence type="evidence at protein level"/>
<organism>
    <name type="scientific">Drosophila melanogaster</name>
    <name type="common">Fruit fly</name>
    <dbReference type="NCBI Taxonomy" id="7227"/>
    <lineage>
        <taxon>Eukaryota</taxon>
        <taxon>Metazoa</taxon>
        <taxon>Ecdysozoa</taxon>
        <taxon>Arthropoda</taxon>
        <taxon>Hexapoda</taxon>
        <taxon>Insecta</taxon>
        <taxon>Pterygota</taxon>
        <taxon>Neoptera</taxon>
        <taxon>Endopterygota</taxon>
        <taxon>Diptera</taxon>
        <taxon>Brachycera</taxon>
        <taxon>Muscomorpha</taxon>
        <taxon>Ephydroidea</taxon>
        <taxon>Drosophilidae</taxon>
        <taxon>Drosophila</taxon>
        <taxon>Sophophora</taxon>
    </lineage>
</organism>
<sequence length="106" mass="12783">MGEETINSTQNKTRTKTTRPKAVYLWTVSDVLKWYRRHCGEYTQYEQLFAQHDITGRALLRITDSSLQRMGVTDNRDREAIWREIVKQRLKTDIMEIRDMERLNIY</sequence>
<reference key="1">
    <citation type="journal article" date="2000" name="Science">
        <title>The genome sequence of Drosophila melanogaster.</title>
        <authorList>
            <person name="Adams M.D."/>
            <person name="Celniker S.E."/>
            <person name="Holt R.A."/>
            <person name="Evans C.A."/>
            <person name="Gocayne J.D."/>
            <person name="Amanatides P.G."/>
            <person name="Scherer S.E."/>
            <person name="Li P.W."/>
            <person name="Hoskins R.A."/>
            <person name="Galle R.F."/>
            <person name="George R.A."/>
            <person name="Lewis S.E."/>
            <person name="Richards S."/>
            <person name="Ashburner M."/>
            <person name="Henderson S.N."/>
            <person name="Sutton G.G."/>
            <person name="Wortman J.R."/>
            <person name="Yandell M.D."/>
            <person name="Zhang Q."/>
            <person name="Chen L.X."/>
            <person name="Brandon R.C."/>
            <person name="Rogers Y.-H.C."/>
            <person name="Blazej R.G."/>
            <person name="Champe M."/>
            <person name="Pfeiffer B.D."/>
            <person name="Wan K.H."/>
            <person name="Doyle C."/>
            <person name="Baxter E.G."/>
            <person name="Helt G."/>
            <person name="Nelson C.R."/>
            <person name="Miklos G.L.G."/>
            <person name="Abril J.F."/>
            <person name="Agbayani A."/>
            <person name="An H.-J."/>
            <person name="Andrews-Pfannkoch C."/>
            <person name="Baldwin D."/>
            <person name="Ballew R.M."/>
            <person name="Basu A."/>
            <person name="Baxendale J."/>
            <person name="Bayraktaroglu L."/>
            <person name="Beasley E.M."/>
            <person name="Beeson K.Y."/>
            <person name="Benos P.V."/>
            <person name="Berman B.P."/>
            <person name="Bhandari D."/>
            <person name="Bolshakov S."/>
            <person name="Borkova D."/>
            <person name="Botchan M.R."/>
            <person name="Bouck J."/>
            <person name="Brokstein P."/>
            <person name="Brottier P."/>
            <person name="Burtis K.C."/>
            <person name="Busam D.A."/>
            <person name="Butler H."/>
            <person name="Cadieu E."/>
            <person name="Center A."/>
            <person name="Chandra I."/>
            <person name="Cherry J.M."/>
            <person name="Cawley S."/>
            <person name="Dahlke C."/>
            <person name="Davenport L.B."/>
            <person name="Davies P."/>
            <person name="de Pablos B."/>
            <person name="Delcher A."/>
            <person name="Deng Z."/>
            <person name="Mays A.D."/>
            <person name="Dew I."/>
            <person name="Dietz S.M."/>
            <person name="Dodson K."/>
            <person name="Doup L.E."/>
            <person name="Downes M."/>
            <person name="Dugan-Rocha S."/>
            <person name="Dunkov B.C."/>
            <person name="Dunn P."/>
            <person name="Durbin K.J."/>
            <person name="Evangelista C.C."/>
            <person name="Ferraz C."/>
            <person name="Ferriera S."/>
            <person name="Fleischmann W."/>
            <person name="Fosler C."/>
            <person name="Gabrielian A.E."/>
            <person name="Garg N.S."/>
            <person name="Gelbart W.M."/>
            <person name="Glasser K."/>
            <person name="Glodek A."/>
            <person name="Gong F."/>
            <person name="Gorrell J.H."/>
            <person name="Gu Z."/>
            <person name="Guan P."/>
            <person name="Harris M."/>
            <person name="Harris N.L."/>
            <person name="Harvey D.A."/>
            <person name="Heiman T.J."/>
            <person name="Hernandez J.R."/>
            <person name="Houck J."/>
            <person name="Hostin D."/>
            <person name="Houston K.A."/>
            <person name="Howland T.J."/>
            <person name="Wei M.-H."/>
            <person name="Ibegwam C."/>
            <person name="Jalali M."/>
            <person name="Kalush F."/>
            <person name="Karpen G.H."/>
            <person name="Ke Z."/>
            <person name="Kennison J.A."/>
            <person name="Ketchum K.A."/>
            <person name="Kimmel B.E."/>
            <person name="Kodira C.D."/>
            <person name="Kraft C.L."/>
            <person name="Kravitz S."/>
            <person name="Kulp D."/>
            <person name="Lai Z."/>
            <person name="Lasko P."/>
            <person name="Lei Y."/>
            <person name="Levitsky A.A."/>
            <person name="Li J.H."/>
            <person name="Li Z."/>
            <person name="Liang Y."/>
            <person name="Lin X."/>
            <person name="Liu X."/>
            <person name="Mattei B."/>
            <person name="McIntosh T.C."/>
            <person name="McLeod M.P."/>
            <person name="McPherson D."/>
            <person name="Merkulov G."/>
            <person name="Milshina N.V."/>
            <person name="Mobarry C."/>
            <person name="Morris J."/>
            <person name="Moshrefi A."/>
            <person name="Mount S.M."/>
            <person name="Moy M."/>
            <person name="Murphy B."/>
            <person name="Murphy L."/>
            <person name="Muzny D.M."/>
            <person name="Nelson D.L."/>
            <person name="Nelson D.R."/>
            <person name="Nelson K.A."/>
            <person name="Nixon K."/>
            <person name="Nusskern D.R."/>
            <person name="Pacleb J.M."/>
            <person name="Palazzolo M."/>
            <person name="Pittman G.S."/>
            <person name="Pan S."/>
            <person name="Pollard J."/>
            <person name="Puri V."/>
            <person name="Reese M.G."/>
            <person name="Reinert K."/>
            <person name="Remington K."/>
            <person name="Saunders R.D.C."/>
            <person name="Scheeler F."/>
            <person name="Shen H."/>
            <person name="Shue B.C."/>
            <person name="Siden-Kiamos I."/>
            <person name="Simpson M."/>
            <person name="Skupski M.P."/>
            <person name="Smith T.J."/>
            <person name="Spier E."/>
            <person name="Spradling A.C."/>
            <person name="Stapleton M."/>
            <person name="Strong R."/>
            <person name="Sun E."/>
            <person name="Svirskas R."/>
            <person name="Tector C."/>
            <person name="Turner R."/>
            <person name="Venter E."/>
            <person name="Wang A.H."/>
            <person name="Wang X."/>
            <person name="Wang Z.-Y."/>
            <person name="Wassarman D.A."/>
            <person name="Weinstock G.M."/>
            <person name="Weissenbach J."/>
            <person name="Williams S.M."/>
            <person name="Woodage T."/>
            <person name="Worley K.C."/>
            <person name="Wu D."/>
            <person name="Yang S."/>
            <person name="Yao Q.A."/>
            <person name="Ye J."/>
            <person name="Yeh R.-F."/>
            <person name="Zaveri J.S."/>
            <person name="Zhan M."/>
            <person name="Zhang G."/>
            <person name="Zhao Q."/>
            <person name="Zheng L."/>
            <person name="Zheng X.H."/>
            <person name="Zhong F.N."/>
            <person name="Zhong W."/>
            <person name="Zhou X."/>
            <person name="Zhu S.C."/>
            <person name="Zhu X."/>
            <person name="Smith H.O."/>
            <person name="Gibbs R.A."/>
            <person name="Myers E.W."/>
            <person name="Rubin G.M."/>
            <person name="Venter J.C."/>
        </authorList>
    </citation>
    <scope>NUCLEOTIDE SEQUENCE [LARGE SCALE GENOMIC DNA]</scope>
    <source>
        <strain>Berkeley</strain>
    </source>
</reference>
<reference key="2">
    <citation type="journal article" date="2002" name="Genome Biol.">
        <title>Annotation of the Drosophila melanogaster euchromatic genome: a systematic review.</title>
        <authorList>
            <person name="Misra S."/>
            <person name="Crosby M.A."/>
            <person name="Mungall C.J."/>
            <person name="Matthews B.B."/>
            <person name="Campbell K.S."/>
            <person name="Hradecky P."/>
            <person name="Huang Y."/>
            <person name="Kaminker J.S."/>
            <person name="Millburn G.H."/>
            <person name="Prochnik S.E."/>
            <person name="Smith C.D."/>
            <person name="Tupy J.L."/>
            <person name="Whitfield E.J."/>
            <person name="Bayraktaroglu L."/>
            <person name="Berman B.P."/>
            <person name="Bettencourt B.R."/>
            <person name="Celniker S.E."/>
            <person name="de Grey A.D.N.J."/>
            <person name="Drysdale R.A."/>
            <person name="Harris N.L."/>
            <person name="Richter J."/>
            <person name="Russo S."/>
            <person name="Schroeder A.J."/>
            <person name="Shu S.Q."/>
            <person name="Stapleton M."/>
            <person name="Yamada C."/>
            <person name="Ashburner M."/>
            <person name="Gelbart W.M."/>
            <person name="Rubin G.M."/>
            <person name="Lewis S.E."/>
        </authorList>
    </citation>
    <scope>GENOME REANNOTATION</scope>
    <source>
        <strain>Berkeley</strain>
    </source>
</reference>
<reference key="3">
    <citation type="journal article" date="2002" name="Genome Biol.">
        <title>A Drosophila full-length cDNA resource.</title>
        <authorList>
            <person name="Stapleton M."/>
            <person name="Carlson J.W."/>
            <person name="Brokstein P."/>
            <person name="Yu C."/>
            <person name="Champe M."/>
            <person name="George R.A."/>
            <person name="Guarin H."/>
            <person name="Kronmiller B."/>
            <person name="Pacleb J.M."/>
            <person name="Park S."/>
            <person name="Wan K.H."/>
            <person name="Rubin G.M."/>
            <person name="Celniker S.E."/>
        </authorList>
    </citation>
    <scope>NUCLEOTIDE SEQUENCE [LARGE SCALE MRNA]</scope>
    <source>
        <strain>Berkeley</strain>
        <tissue>Embryo</tissue>
    </source>
</reference>
<reference key="4">
    <citation type="journal article" date="2006" name="Genes Dev.">
        <title>The novel SAM domain protein Aveugle is required for Raf activation in the Drosophila EGF receptor signaling pathway.</title>
        <authorList>
            <person name="Roignant J.-Y."/>
            <person name="Hamel S."/>
            <person name="Janody F."/>
            <person name="Treisman J.E."/>
        </authorList>
    </citation>
    <scope>FUNCTION</scope>
    <scope>SUBCELLULAR LOCATION</scope>
    <scope>DEVELOPMENTAL STAGE</scope>
    <scope>INTERACTION WITH CNK</scope>
</reference>
<feature type="chain" id="PRO_0000235297" description="Protein aveugle">
    <location>
        <begin position="1"/>
        <end position="106"/>
    </location>
</feature>
<feature type="domain" description="SAM" evidence="1">
    <location>
        <begin position="26"/>
        <end position="91"/>
    </location>
</feature>
<feature type="helix" evidence="3">
    <location>
        <begin position="23"/>
        <end position="25"/>
    </location>
</feature>
<feature type="helix" evidence="3">
    <location>
        <begin position="28"/>
        <end position="38"/>
    </location>
</feature>
<feature type="helix" evidence="3">
    <location>
        <begin position="40"/>
        <end position="45"/>
    </location>
</feature>
<feature type="helix" evidence="3">
    <location>
        <begin position="46"/>
        <end position="51"/>
    </location>
</feature>
<feature type="helix" evidence="3">
    <location>
        <begin position="56"/>
        <end position="59"/>
    </location>
</feature>
<feature type="helix" evidence="3">
    <location>
        <begin position="64"/>
        <end position="70"/>
    </location>
</feature>
<feature type="helix" evidence="3">
    <location>
        <begin position="75"/>
        <end position="94"/>
    </location>
</feature>
<accession>Q8ML92</accession>
<protein>
    <recommendedName>
        <fullName>Protein aveugle</fullName>
    </recommendedName>
</protein>